<proteinExistence type="evidence at transcript level"/>
<feature type="initiator methionine" description="Removed" evidence="1">
    <location>
        <position position="1"/>
    </location>
</feature>
<feature type="chain" id="PRO_0000371570" description="Small ribosomal subunit protein uS2">
    <location>
        <begin position="2"/>
        <end position="317"/>
    </location>
</feature>
<feature type="repeat" description="[DE]-W-[ST] 1">
    <location>
        <begin position="230"/>
        <end position="232"/>
    </location>
</feature>
<feature type="repeat" description="[DE]-W-[ST] 2">
    <location>
        <begin position="245"/>
        <end position="247"/>
    </location>
</feature>
<feature type="repeat" description="[DE]-W-[ST] 3">
    <location>
        <begin position="288"/>
        <end position="290"/>
    </location>
</feature>
<feature type="repeat" description="[DE]-W-[ST] 4">
    <location>
        <begin position="297"/>
        <end position="299"/>
    </location>
</feature>
<feature type="repeat" description="[DE]-W-[ST] 5">
    <location>
        <begin position="315"/>
        <end position="317"/>
    </location>
</feature>
<feature type="region of interest" description="Laminin-binding" evidence="1">
    <location>
        <begin position="161"/>
        <end position="180"/>
    </location>
</feature>
<feature type="region of interest" description="Laminin-binding" evidence="1">
    <location>
        <begin position="205"/>
        <end position="229"/>
    </location>
</feature>
<feature type="region of interest" description="Laminin-binding" evidence="1">
    <location>
        <begin position="242"/>
        <end position="317"/>
    </location>
</feature>
<feature type="region of interest" description="Disordered" evidence="2">
    <location>
        <begin position="278"/>
        <end position="317"/>
    </location>
</feature>
<feature type="site" description="Cleavage; by ST3; site 1" evidence="1">
    <location>
        <begin position="115"/>
        <end position="116"/>
    </location>
</feature>
<feature type="site" description="Cleavage; by ST3; site 2" evidence="1">
    <location>
        <begin position="133"/>
        <end position="134"/>
    </location>
</feature>
<feature type="modified residue" description="N-acetylserine" evidence="1">
    <location>
        <position position="2"/>
    </location>
</feature>
<sequence>MSGGLDVLQMKEEDVLKFLAAGTHLGGTNLDFQMEQYVYKRKSDGIYIINLKKTWEKLLLAARAIVAIENPADVCVISSRNTGQRACLKFASGTGATTFAGRFTPGTFTNQIQAAFREPRLLIVTDPRADHQPLTEASYVNIPTIALCNTDSPLRYVDIAIPCNNKGPHSVGLMWWMLAREVLRMRGTISREHPWEVMPDLYFYRDPEEIEKEEQAAAEKAVGKEEFQGEWSAPVADIAQLEVPDWSEGVQVPSVPIQQFPAGIEAATAAAAVVAAKPGPTTEGYSEDWSAQPATEDWSAAPTAQAGDWGGSTAEWS</sequence>
<protein>
    <recommendedName>
        <fullName evidence="1">Small ribosomal subunit protein uS2</fullName>
    </recommendedName>
    <alternativeName>
        <fullName evidence="1">37 kDa laminin receptor precursor</fullName>
        <shortName evidence="1">37LRP</shortName>
    </alternativeName>
    <alternativeName>
        <fullName evidence="1">37/67 kDa laminin receptor</fullName>
        <shortName evidence="1">LRP/LR</shortName>
    </alternativeName>
    <alternativeName>
        <fullName evidence="3">40S ribosomal protein SA</fullName>
    </alternativeName>
    <alternativeName>
        <fullName evidence="1">67 kDa laminin receptor</fullName>
        <shortName evidence="1">67LR</shortName>
    </alternativeName>
    <alternativeName>
        <fullName evidence="1">Laminin receptor 1</fullName>
        <shortName evidence="1">LamR</shortName>
    </alternativeName>
    <alternativeName>
        <fullName evidence="1">Laminin-binding protein precursor p40</fullName>
        <shortName evidence="1">LBP/p40</shortName>
    </alternativeName>
</protein>
<organism>
    <name type="scientific">Ictalurus punctatus</name>
    <name type="common">Channel catfish</name>
    <name type="synonym">Silurus punctatus</name>
    <dbReference type="NCBI Taxonomy" id="7998"/>
    <lineage>
        <taxon>Eukaryota</taxon>
        <taxon>Metazoa</taxon>
        <taxon>Chordata</taxon>
        <taxon>Craniata</taxon>
        <taxon>Vertebrata</taxon>
        <taxon>Euteleostomi</taxon>
        <taxon>Actinopterygii</taxon>
        <taxon>Neopterygii</taxon>
        <taxon>Teleostei</taxon>
        <taxon>Ostariophysi</taxon>
        <taxon>Siluriformes</taxon>
        <taxon>Ictaluridae</taxon>
        <taxon>Ictalurus</taxon>
    </lineage>
</organism>
<dbReference type="EMBL" id="AF402808">
    <property type="protein sequence ID" value="AAK95182.1"/>
    <property type="molecule type" value="mRNA"/>
</dbReference>
<dbReference type="RefSeq" id="NP_001187066.1">
    <property type="nucleotide sequence ID" value="NM_001200137.1"/>
</dbReference>
<dbReference type="SMR" id="Q90YS4"/>
<dbReference type="STRING" id="7998.ENSIPUP00000005640"/>
<dbReference type="GeneID" id="100304555"/>
<dbReference type="KEGG" id="ipu:100304555"/>
<dbReference type="CTD" id="3921"/>
<dbReference type="OrthoDB" id="414863at2759"/>
<dbReference type="Proteomes" id="UP000221080">
    <property type="component" value="Chromosome 12"/>
</dbReference>
<dbReference type="GO" id="GO:0022627">
    <property type="term" value="C:cytosolic small ribosomal subunit"/>
    <property type="evidence" value="ECO:0007669"/>
    <property type="project" value="UniProtKB-UniRule"/>
</dbReference>
<dbReference type="GO" id="GO:0005634">
    <property type="term" value="C:nucleus"/>
    <property type="evidence" value="ECO:0007669"/>
    <property type="project" value="UniProtKB-SubCell"/>
</dbReference>
<dbReference type="GO" id="GO:0005886">
    <property type="term" value="C:plasma membrane"/>
    <property type="evidence" value="ECO:0007669"/>
    <property type="project" value="UniProtKB-SubCell"/>
</dbReference>
<dbReference type="GO" id="GO:0043236">
    <property type="term" value="F:laminin binding"/>
    <property type="evidence" value="ECO:0007669"/>
    <property type="project" value="UniProtKB-UniRule"/>
</dbReference>
<dbReference type="GO" id="GO:0005055">
    <property type="term" value="F:laminin receptor activity"/>
    <property type="evidence" value="ECO:0007669"/>
    <property type="project" value="UniProtKB-UniRule"/>
</dbReference>
<dbReference type="GO" id="GO:0003735">
    <property type="term" value="F:structural constituent of ribosome"/>
    <property type="evidence" value="ECO:0007669"/>
    <property type="project" value="UniProtKB-UniRule"/>
</dbReference>
<dbReference type="GO" id="GO:0000028">
    <property type="term" value="P:ribosomal small subunit assembly"/>
    <property type="evidence" value="ECO:0007669"/>
    <property type="project" value="UniProtKB-UniRule"/>
</dbReference>
<dbReference type="GO" id="GO:0006412">
    <property type="term" value="P:translation"/>
    <property type="evidence" value="ECO:0007669"/>
    <property type="project" value="UniProtKB-UniRule"/>
</dbReference>
<dbReference type="CDD" id="cd01425">
    <property type="entry name" value="RPS2"/>
    <property type="match status" value="1"/>
</dbReference>
<dbReference type="FunFam" id="3.40.50.10490:FF:000012">
    <property type="entry name" value="40S ribosomal protein SA"/>
    <property type="match status" value="1"/>
</dbReference>
<dbReference type="Gene3D" id="3.40.50.10490">
    <property type="entry name" value="Glucose-6-phosphate isomerase like protein, domain 1"/>
    <property type="match status" value="1"/>
</dbReference>
<dbReference type="HAMAP" id="MF_03015">
    <property type="entry name" value="Ribosomal_S2_euk"/>
    <property type="match status" value="1"/>
</dbReference>
<dbReference type="HAMAP" id="MF_03016">
    <property type="entry name" value="Ribosomal_S2_laminin_receptor"/>
    <property type="match status" value="1"/>
</dbReference>
<dbReference type="InterPro" id="IPR001865">
    <property type="entry name" value="Ribosomal_uS2"/>
</dbReference>
<dbReference type="InterPro" id="IPR032281">
    <property type="entry name" value="Ribosomal_uS2_C"/>
</dbReference>
<dbReference type="InterPro" id="IPR018130">
    <property type="entry name" value="Ribosomal_uS2_CS"/>
</dbReference>
<dbReference type="InterPro" id="IPR027498">
    <property type="entry name" value="Ribosomal_uS2_euk"/>
</dbReference>
<dbReference type="InterPro" id="IPR005707">
    <property type="entry name" value="Ribosomal_uS2_euk/arc"/>
</dbReference>
<dbReference type="InterPro" id="IPR023591">
    <property type="entry name" value="Ribosomal_uS2_flav_dom_sf"/>
</dbReference>
<dbReference type="InterPro" id="IPR027504">
    <property type="entry name" value="Ribosomal_uS2_vert"/>
</dbReference>
<dbReference type="NCBIfam" id="TIGR01012">
    <property type="entry name" value="uS2_euk_arch"/>
    <property type="match status" value="1"/>
</dbReference>
<dbReference type="PANTHER" id="PTHR11489">
    <property type="entry name" value="40S RIBOSOMAL PROTEIN SA"/>
    <property type="match status" value="1"/>
</dbReference>
<dbReference type="Pfam" id="PF16122">
    <property type="entry name" value="40S_SA_C"/>
    <property type="match status" value="1"/>
</dbReference>
<dbReference type="Pfam" id="PF00318">
    <property type="entry name" value="Ribosomal_S2"/>
    <property type="match status" value="2"/>
</dbReference>
<dbReference type="PRINTS" id="PR00395">
    <property type="entry name" value="RIBOSOMALS2"/>
</dbReference>
<dbReference type="SUPFAM" id="SSF52313">
    <property type="entry name" value="Ribosomal protein S2"/>
    <property type="match status" value="1"/>
</dbReference>
<dbReference type="PROSITE" id="PS00962">
    <property type="entry name" value="RIBOSOMAL_S2_1"/>
    <property type="match status" value="1"/>
</dbReference>
<dbReference type="PROSITE" id="PS00963">
    <property type="entry name" value="RIBOSOMAL_S2_2"/>
    <property type="match status" value="1"/>
</dbReference>
<evidence type="ECO:0000255" key="1">
    <source>
        <dbReference type="HAMAP-Rule" id="MF_03016"/>
    </source>
</evidence>
<evidence type="ECO:0000256" key="2">
    <source>
        <dbReference type="SAM" id="MobiDB-lite"/>
    </source>
</evidence>
<evidence type="ECO:0000305" key="3"/>
<keyword id="KW-0007">Acetylation</keyword>
<keyword id="KW-1003">Cell membrane</keyword>
<keyword id="KW-0963">Cytoplasm</keyword>
<keyword id="KW-0472">Membrane</keyword>
<keyword id="KW-0539">Nucleus</keyword>
<keyword id="KW-0675">Receptor</keyword>
<keyword id="KW-0677">Repeat</keyword>
<keyword id="KW-0687">Ribonucleoprotein</keyword>
<keyword id="KW-0689">Ribosomal protein</keyword>
<name>RSSA_ICTPU</name>
<accession>Q90YS4</accession>
<comment type="function">
    <text evidence="1">Required for the assembly and/or stability of the 40S ribosomal subunit. Required for the processing of the 20S rRNA-precursor to mature 18S rRNA in a late step of the maturation of 40S ribosomal subunits. Also functions as a cell surface receptor for laminin. Plays a role in cell adhesion to the basement membrane and in the consequent activation of signaling transduction pathways. May play a role in cell fate determination and tissue morphogenesis.</text>
</comment>
<comment type="subunit">
    <text evidence="1">Monomer (37LRP) and homodimer (67LR). Component of the small ribosomal subunit. Mature ribosomes consist of a small (40S) and a large (60S) subunit. The 40S subunit contains about 33 different proteins and 1 molecule of RNA (18S). The 60S subunit contains about 49 different proteins and 3 molecules of RNA (28S, 5.8S and 5S). Interacts with rps21. Interacts with several laminins including at least lamb1. Interacts with mdk.</text>
</comment>
<comment type="subcellular location">
    <subcellularLocation>
        <location evidence="1">Cell membrane</location>
    </subcellularLocation>
    <subcellularLocation>
        <location evidence="1">Cytoplasm</location>
    </subcellularLocation>
    <subcellularLocation>
        <location evidence="1">Nucleus</location>
    </subcellularLocation>
    <text evidence="1">67LR is found at the surface of the plasma membrane, with its C-terminal laminin-binding domain accessible to extracellular ligands. 37LRP is found at the cell surface, in the cytoplasm and in the nucleus.</text>
</comment>
<comment type="PTM">
    <text evidence="1">Acylated. Acylation may be a prerequisite for conversion of the monomeric 37 kDa laminin receptor precursor (37LRP) to the mature dimeric 67 kDa laminin receptor (67LR), and may provide a mechanism for membrane association.</text>
</comment>
<comment type="PTM">
    <text evidence="1">Cleaved by stromelysin-3 (ST3) at the cell surface. Cleavage by stromelysin-3 may be a mechanism to alter cell-extracellular matrix interactions.</text>
</comment>
<comment type="miscellaneous">
    <text>This protein appears to have acquired a second function as a laminin receptor specifically in the vertebrate lineage.</text>
</comment>
<comment type="similarity">
    <text evidence="1">Belongs to the universal ribosomal protein uS2 family.</text>
</comment>
<gene>
    <name type="primary">rpsa</name>
</gene>
<reference key="1">
    <citation type="journal article" date="2002" name="Gene">
        <title>Translational machinery of channel catfish: I. A transcriptomic approach to the analysis of 32 40S ribosomal protein genes and their expression.</title>
        <authorList>
            <person name="Karsi A."/>
            <person name="Patterson A."/>
            <person name="Feng J."/>
            <person name="Liu Z.-J."/>
        </authorList>
    </citation>
    <scope>NUCLEOTIDE SEQUENCE [MRNA]</scope>
</reference>